<sequence>MKVYDCCDKVRELYSLIGSGDQGYIPQAITCAVKTLNDIAADESLPKEARERAAFAAANLLISDFEDK</sequence>
<accession>B5FBB5</accession>
<protein>
    <recommendedName>
        <fullName evidence="1">UPF0253 protein VFMJ11_0680</fullName>
    </recommendedName>
</protein>
<evidence type="ECO:0000255" key="1">
    <source>
        <dbReference type="HAMAP-Rule" id="MF_01064"/>
    </source>
</evidence>
<feature type="chain" id="PRO_1000136547" description="UPF0253 protein VFMJ11_0680">
    <location>
        <begin position="1"/>
        <end position="68"/>
    </location>
</feature>
<organism>
    <name type="scientific">Aliivibrio fischeri (strain MJ11)</name>
    <name type="common">Vibrio fischeri</name>
    <dbReference type="NCBI Taxonomy" id="388396"/>
    <lineage>
        <taxon>Bacteria</taxon>
        <taxon>Pseudomonadati</taxon>
        <taxon>Pseudomonadota</taxon>
        <taxon>Gammaproteobacteria</taxon>
        <taxon>Vibrionales</taxon>
        <taxon>Vibrionaceae</taxon>
        <taxon>Aliivibrio</taxon>
    </lineage>
</organism>
<dbReference type="EMBL" id="CP001139">
    <property type="protein sequence ID" value="ACH66956.1"/>
    <property type="molecule type" value="Genomic_DNA"/>
</dbReference>
<dbReference type="RefSeq" id="WP_005418000.1">
    <property type="nucleotide sequence ID" value="NC_011184.1"/>
</dbReference>
<dbReference type="SMR" id="B5FBB5"/>
<dbReference type="KEGG" id="vfm:VFMJ11_0680"/>
<dbReference type="HOGENOM" id="CLU_190008_0_0_6"/>
<dbReference type="Proteomes" id="UP000001857">
    <property type="component" value="Chromosome I"/>
</dbReference>
<dbReference type="HAMAP" id="MF_01064">
    <property type="entry name" value="UPF0253"/>
    <property type="match status" value="1"/>
</dbReference>
<dbReference type="InterPro" id="IPR009624">
    <property type="entry name" value="UPF0253"/>
</dbReference>
<dbReference type="NCBIfam" id="NF003436">
    <property type="entry name" value="PRK04964.1"/>
    <property type="match status" value="1"/>
</dbReference>
<dbReference type="Pfam" id="PF06786">
    <property type="entry name" value="UPF0253"/>
    <property type="match status" value="1"/>
</dbReference>
<comment type="similarity">
    <text evidence="1">Belongs to the UPF0253 family.</text>
</comment>
<proteinExistence type="inferred from homology"/>
<name>Y680_ALIFM</name>
<reference key="1">
    <citation type="submission" date="2008-08" db="EMBL/GenBank/DDBJ databases">
        <title>Complete sequence of Vibrio fischeri strain MJ11.</title>
        <authorList>
            <person name="Mandel M.J."/>
            <person name="Stabb E.V."/>
            <person name="Ruby E.G."/>
            <person name="Ferriera S."/>
            <person name="Johnson J."/>
            <person name="Kravitz S."/>
            <person name="Beeson K."/>
            <person name="Sutton G."/>
            <person name="Rogers Y.-H."/>
            <person name="Friedman R."/>
            <person name="Frazier M."/>
            <person name="Venter J.C."/>
        </authorList>
    </citation>
    <scope>NUCLEOTIDE SEQUENCE [LARGE SCALE GENOMIC DNA]</scope>
    <source>
        <strain>MJ11</strain>
    </source>
</reference>
<gene>
    <name type="ordered locus">VFMJ11_0680</name>
</gene>